<feature type="chain" id="PRO_0000099588" description="Virion assembly protein OPG100">
    <location>
        <begin position="1"/>
        <end position="153"/>
    </location>
</feature>
<feature type="mutagenesis site" description="Blockage of virion morphogenesis at non-permissve temperature and loss of association with A30L, G7L, and F10L proteins." evidence="3">
    <original>P</original>
    <variation>D</variation>
    <variation>S</variation>
    <location>
        <position position="132"/>
    </location>
</feature>
<reference key="1">
    <citation type="journal article" date="1985" name="Nucleic Acids Res.">
        <title>Nucleotide sequence of a cluster of early and late genes in a conserved segment of the vaccinia virus genome.</title>
        <authorList>
            <person name="Plucienniczak A."/>
            <person name="Schroeder E."/>
            <person name="Zettlmeissl G."/>
            <person name="Streeck R.E."/>
        </authorList>
    </citation>
    <scope>NUCLEOTIDE SEQUENCE [GENOMIC DNA]</scope>
</reference>
<reference key="2">
    <citation type="submission" date="2003-02" db="EMBL/GenBank/DDBJ databases">
        <title>Sequencing of the coding region of Vaccinia-WR to an average 9-fold redundancy and an error rate of 0.16/10kb.</title>
        <authorList>
            <person name="Esposito J.J."/>
            <person name="Frace A.M."/>
            <person name="Sammons S.A."/>
            <person name="Olsen-Rasmussen M."/>
            <person name="Osborne J."/>
            <person name="Wohlhueter R."/>
        </authorList>
    </citation>
    <scope>NUCLEOTIDE SEQUENCE [LARGE SCALE GENOMIC DNA]</scope>
</reference>
<reference key="3">
    <citation type="journal article" date="2002" name="J. Virol.">
        <title>Vaccinia virus J1R protein: a viral membrane protein that is essential for virion morphogenesis.</title>
        <authorList>
            <person name="Chiu W.L."/>
            <person name="Chang W."/>
        </authorList>
    </citation>
    <scope>FUNCTION</scope>
    <scope>INTERACTION WITH OPG175</scope>
    <scope>SUBCELLULAR LOCATION</scope>
    <scope>INDUCTION</scope>
</reference>
<reference key="4">
    <citation type="journal article" date="2004" name="Virology">
        <title>A complex of seven vaccinia virus proteins conserved in all chordopoxviruses is required for the association of membranes and viroplasm to form immature virions.</title>
        <authorList>
            <person name="Szajner P."/>
            <person name="Jaffe H."/>
            <person name="Weisberg A.S."/>
            <person name="Moss B."/>
        </authorList>
    </citation>
    <scope>IDENTIFICATION IN COMPLEX WITH OPG054</scope>
    <scope>OPG092</scope>
    <scope>OPG114</scope>
    <scope>OPG115</scope>
    <scope>OPG142 AND OPG157</scope>
    <scope>FUNCTION</scope>
</reference>
<reference key="5">
    <citation type="journal article" date="2005" name="J. Virol.">
        <title>Effects of a temperature sensitivity mutation in the J1R protein component of a complex required for vaccinia virus assembly.</title>
        <authorList>
            <person name="Chiu W.L."/>
            <person name="Szajner P."/>
            <person name="Moss B."/>
            <person name="Chang W."/>
        </authorList>
    </citation>
    <scope>FUNCTION</scope>
    <scope>SUBUNIT</scope>
    <scope>MUTAGENESIS OF PRO-132</scope>
</reference>
<evidence type="ECO:0000269" key="1">
    <source>
    </source>
</evidence>
<evidence type="ECO:0000269" key="2">
    <source>
    </source>
</evidence>
<evidence type="ECO:0000269" key="3">
    <source>
    </source>
</evidence>
<evidence type="ECO:0000305" key="4"/>
<evidence type="ECO:0000305" key="5">
    <source>
    </source>
</evidence>
<evidence type="ECO:0000305" key="6">
    <source>
    </source>
</evidence>
<evidence type="ECO:0000305" key="7">
    <source>
    </source>
</evidence>
<organism>
    <name type="scientific">Vaccinia virus (strain Western Reserve)</name>
    <name type="common">VACV</name>
    <name type="synonym">Vaccinia virus (strain WR)</name>
    <dbReference type="NCBI Taxonomy" id="10254"/>
    <lineage>
        <taxon>Viruses</taxon>
        <taxon>Varidnaviria</taxon>
        <taxon>Bamfordvirae</taxon>
        <taxon>Nucleocytoviricota</taxon>
        <taxon>Pokkesviricetes</taxon>
        <taxon>Chitovirales</taxon>
        <taxon>Poxviridae</taxon>
        <taxon>Chordopoxvirinae</taxon>
        <taxon>Orthopoxvirus</taxon>
        <taxon>Vaccinia virus</taxon>
    </lineage>
</organism>
<keyword id="KW-1035">Host cytoplasm</keyword>
<keyword id="KW-0426">Late protein</keyword>
<keyword id="KW-1185">Reference proteome</keyword>
<keyword id="KW-0946">Virion</keyword>
<organismHost>
    <name type="scientific">Bos taurus</name>
    <name type="common">Bovine</name>
    <dbReference type="NCBI Taxonomy" id="9913"/>
</organismHost>
<gene>
    <name type="primary">OPG100</name>
    <name type="ordered locus">VACWR093</name>
    <name type="ORF">J1R</name>
</gene>
<protein>
    <recommendedName>
        <fullName>Virion assembly protein OPG100</fullName>
    </recommendedName>
    <alternativeName>
        <fullName>Protein F7</fullName>
    </alternativeName>
</protein>
<proteinExistence type="evidence at protein level"/>
<sequence>MDHNQYLLTMFFADDDSFFKYLASQDDESSLSDILQITQYLDFLLLLLIQSKNKLEAVGHCYESLSEEYRQLTKFTDFQDFKKLFNKVPIVTDGRVKLNKGYLFDFVISLMRFKKESSLATTAIDPVRYIDPRRNIAFSNVMDILKSNKVNNN</sequence>
<accession>P07616</accession>
<accession>Q76ZT3</accession>
<name>PG100_VACCW</name>
<comment type="function">
    <text evidence="5 6 7">Late protein which is a part of a large complex required for early virion morphogenesis. This complex participates in the formation of virosomes and the incorporation of virosomal contents into nascent immature virions. Plays a role in DNA packaging during immature virions (IV) formation (Probable).</text>
</comment>
<comment type="subunit">
    <text evidence="1 2 3">Homodimer. Part of a complex composed of the kinase OPG054, OPG092, OPG114, OPG115, OPG142 and OPG157. Interacts with OPG175 (PubMed:12208937).</text>
</comment>
<comment type="subcellular location">
    <subcellularLocation>
        <location evidence="1">Virion</location>
    </subcellularLocation>
    <subcellularLocation>
        <location evidence="1">Host cytoplasm</location>
    </subcellularLocation>
    <text>Localizes in cytoplasmic virus factories. Probably located in between the core and the virion membrane.</text>
</comment>
<comment type="induction">
    <text evidence="1">Expressed in the late phase of the viral replicative cycle.</text>
</comment>
<comment type="similarity">
    <text evidence="4">Belongs to the orthopoxvirus OPG100 family.</text>
</comment>
<dbReference type="EMBL" id="X01978">
    <property type="protein sequence ID" value="CAA26015.1"/>
    <property type="molecule type" value="Genomic_DNA"/>
</dbReference>
<dbReference type="EMBL" id="AY243312">
    <property type="protein sequence ID" value="AAO89372.1"/>
    <property type="molecule type" value="Genomic_DNA"/>
</dbReference>
<dbReference type="PIR" id="F23092">
    <property type="entry name" value="QQVZF7"/>
</dbReference>
<dbReference type="RefSeq" id="YP_232975.1">
    <property type="nucleotide sequence ID" value="NC_006998.1"/>
</dbReference>
<dbReference type="DIP" id="DIP-2174N"/>
<dbReference type="IntAct" id="P07616">
    <property type="interactions" value="1"/>
</dbReference>
<dbReference type="MINT" id="P07616"/>
<dbReference type="DNASU" id="3707549"/>
<dbReference type="GeneID" id="3707549"/>
<dbReference type="KEGG" id="vg:3707549"/>
<dbReference type="Proteomes" id="UP000000344">
    <property type="component" value="Genome"/>
</dbReference>
<dbReference type="GO" id="GO:0030430">
    <property type="term" value="C:host cell cytoplasm"/>
    <property type="evidence" value="ECO:0007669"/>
    <property type="project" value="UniProtKB-SubCell"/>
</dbReference>
<dbReference type="GO" id="GO:0044423">
    <property type="term" value="C:virion component"/>
    <property type="evidence" value="ECO:0007669"/>
    <property type="project" value="UniProtKB-KW"/>
</dbReference>
<dbReference type="InterPro" id="IPR005006">
    <property type="entry name" value="Poxvirus_J1"/>
</dbReference>
<dbReference type="Pfam" id="PF03338">
    <property type="entry name" value="Pox_J1"/>
    <property type="match status" value="1"/>
</dbReference>